<protein>
    <recommendedName>
        <fullName>V-type proton ATPase subunit B 1</fullName>
        <shortName>V-ATPase subunit B 1</shortName>
    </recommendedName>
    <alternativeName>
        <fullName>Vacuolar proton pump subunit B 1</fullName>
    </alternativeName>
</protein>
<organism>
    <name type="scientific">Acetabularia acetabulum</name>
    <name type="common">Mermaid's wine glass</name>
    <name type="synonym">Acetabularia mediterranea</name>
    <dbReference type="NCBI Taxonomy" id="35845"/>
    <lineage>
        <taxon>Eukaryota</taxon>
        <taxon>Viridiplantae</taxon>
        <taxon>Chlorophyta</taxon>
        <taxon>Ulvophyceae</taxon>
        <taxon>TCBD clade</taxon>
        <taxon>Dasycladales</taxon>
        <taxon>Polyphysaceae</taxon>
        <taxon>Acetabularia</taxon>
    </lineage>
</organism>
<evidence type="ECO:0000305" key="1"/>
<keyword id="KW-0375">Hydrogen ion transport</keyword>
<keyword id="KW-0406">Ion transport</keyword>
<keyword id="KW-0813">Transport</keyword>
<proteinExistence type="evidence at transcript level"/>
<feature type="chain" id="PRO_0000144637" description="V-type proton ATPase subunit B 1">
    <location>
        <begin position="1"/>
        <end position="492"/>
    </location>
</feature>
<name>VATB1_ACEAT</name>
<sequence length="492" mass="54661">MASADVFKANVEAVTRDYICEPRIEYRTVGGVSGPLVVVELVKRPKFAEIVNIRLGNGTSRRGQVLEVDGNRAVVQVFEGTSGIDNRNTTLQFTGEVLSTPVSKDMLGRVFNGSGKPIDGGPPVLAEAYLDIQGSSINPSERTYPEEMIQTGVSTIDVMNSIARGQKIPLFSAAGLPHNDIAAQICRQAGLVKRGNQDSMIDAGHEEEEFAIVFAAMGVNMETAHYFKQDFEENGSMEKTVLFLNLANDPTIERIITPRIALTTAEYLAYECGKHVLVILTDMSSYADALREVSAAREEVPGRRGYPGYMYTDLATIYERAGRIEGRKGSITQLPILTMPNDDITHPIPDLTGYITEGQIYVDRQLHNRQIYPPINVLPSLSRLMKSAIGEGMTRKDHSEVSNQLYANYAIGKDVAAMKAVVGEEALSSEDLLYLEFLDKFERKFVNQGHYEARTIFDSLDLAWTLLRLFPKELLRRITAKTLEKMYERSES</sequence>
<dbReference type="EMBL" id="D50530">
    <property type="protein sequence ID" value="BAA09099.1"/>
    <property type="molecule type" value="mRNA"/>
</dbReference>
<dbReference type="SMR" id="Q38681"/>
<dbReference type="GO" id="GO:0033180">
    <property type="term" value="C:proton-transporting V-type ATPase, V1 domain"/>
    <property type="evidence" value="ECO:0007669"/>
    <property type="project" value="InterPro"/>
</dbReference>
<dbReference type="GO" id="GO:0005524">
    <property type="term" value="F:ATP binding"/>
    <property type="evidence" value="ECO:0007669"/>
    <property type="project" value="InterPro"/>
</dbReference>
<dbReference type="GO" id="GO:0046961">
    <property type="term" value="F:proton-transporting ATPase activity, rotational mechanism"/>
    <property type="evidence" value="ECO:0007669"/>
    <property type="project" value="InterPro"/>
</dbReference>
<dbReference type="GO" id="GO:0046034">
    <property type="term" value="P:ATP metabolic process"/>
    <property type="evidence" value="ECO:0007669"/>
    <property type="project" value="InterPro"/>
</dbReference>
<dbReference type="GO" id="GO:0007035">
    <property type="term" value="P:vacuolar acidification"/>
    <property type="evidence" value="ECO:0007669"/>
    <property type="project" value="TreeGrafter"/>
</dbReference>
<dbReference type="CDD" id="cd18112">
    <property type="entry name" value="ATP-synt_V_A-type_beta_C"/>
    <property type="match status" value="1"/>
</dbReference>
<dbReference type="CDD" id="cd18118">
    <property type="entry name" value="ATP-synt_V_A-type_beta_N"/>
    <property type="match status" value="1"/>
</dbReference>
<dbReference type="CDD" id="cd01135">
    <property type="entry name" value="V_A-ATPase_B"/>
    <property type="match status" value="1"/>
</dbReference>
<dbReference type="FunFam" id="3.40.50.12240:FF:000001">
    <property type="entry name" value="V-type proton ATPase subunit B, brain"/>
    <property type="match status" value="1"/>
</dbReference>
<dbReference type="Gene3D" id="3.40.50.12240">
    <property type="match status" value="1"/>
</dbReference>
<dbReference type="HAMAP" id="MF_00310">
    <property type="entry name" value="ATP_synth_B_arch"/>
    <property type="match status" value="1"/>
</dbReference>
<dbReference type="InterPro" id="IPR055190">
    <property type="entry name" value="ATP-synt_VA_C"/>
</dbReference>
<dbReference type="InterPro" id="IPR020003">
    <property type="entry name" value="ATPase_a/bsu_AS"/>
</dbReference>
<dbReference type="InterPro" id="IPR004100">
    <property type="entry name" value="ATPase_F1/V1/A1_a/bsu_N"/>
</dbReference>
<dbReference type="InterPro" id="IPR000194">
    <property type="entry name" value="ATPase_F1/V1/A1_a/bsu_nucl-bd"/>
</dbReference>
<dbReference type="InterPro" id="IPR005723">
    <property type="entry name" value="ATPase_V1-cplx_bsu"/>
</dbReference>
<dbReference type="InterPro" id="IPR027417">
    <property type="entry name" value="P-loop_NTPase"/>
</dbReference>
<dbReference type="InterPro" id="IPR022879">
    <property type="entry name" value="V-ATPase_su_B/beta"/>
</dbReference>
<dbReference type="NCBIfam" id="NF003235">
    <property type="entry name" value="PRK04196.1"/>
    <property type="match status" value="1"/>
</dbReference>
<dbReference type="NCBIfam" id="TIGR01040">
    <property type="entry name" value="V-ATPase_V1_B"/>
    <property type="match status" value="1"/>
</dbReference>
<dbReference type="PANTHER" id="PTHR43389">
    <property type="entry name" value="V-TYPE PROTON ATPASE SUBUNIT B"/>
    <property type="match status" value="1"/>
</dbReference>
<dbReference type="PANTHER" id="PTHR43389:SF4">
    <property type="entry name" value="V-TYPE PROTON ATPASE SUBUNIT B"/>
    <property type="match status" value="1"/>
</dbReference>
<dbReference type="Pfam" id="PF00006">
    <property type="entry name" value="ATP-synt_ab"/>
    <property type="match status" value="1"/>
</dbReference>
<dbReference type="Pfam" id="PF02874">
    <property type="entry name" value="ATP-synt_ab_N"/>
    <property type="match status" value="1"/>
</dbReference>
<dbReference type="Pfam" id="PF22919">
    <property type="entry name" value="ATP-synt_VA_C"/>
    <property type="match status" value="1"/>
</dbReference>
<dbReference type="PIRSF" id="PIRSF039114">
    <property type="entry name" value="V-ATPsynth_beta/V-ATPase_B"/>
    <property type="match status" value="1"/>
</dbReference>
<dbReference type="SUPFAM" id="SSF52540">
    <property type="entry name" value="P-loop containing nucleoside triphosphate hydrolases"/>
    <property type="match status" value="1"/>
</dbReference>
<dbReference type="PROSITE" id="PS00152">
    <property type="entry name" value="ATPASE_ALPHA_BETA"/>
    <property type="match status" value="1"/>
</dbReference>
<comment type="function">
    <text>Non-catalytic subunit of the peripheral V1 complex of vacuolar ATPase. V-ATPase is responsible for acidifying a variety of intracellular compartments in eukaryotic cells.</text>
</comment>
<comment type="subunit">
    <text>V-ATPase is a heteromultimeric enzyme composed of a peripheral catalytic V1 complex (main components: subunits A, B, C, D, E, and F) attached to an integral membrane V0 proton pore complex (main component: the proteolipid protein).</text>
</comment>
<comment type="similarity">
    <text evidence="1">Belongs to the ATPase alpha/beta chains family.</text>
</comment>
<accession>Q38681</accession>
<reference key="1">
    <citation type="online journal article" date="1995" name="Plant Gene Register">
        <title>Molecular cloning of cDNAs encoding Acetabularia acetabulum V type ATPase, B subunit.</title>
        <authorList>
            <person name="Ikeda M."/>
            <person name="Konishi K."/>
            <person name="Moritani C."/>
            <person name="Kadowaki H."/>
            <person name="Rahman H."/>
            <person name="Ohmori S."/>
        </authorList>
        <locator>PGR95-043</locator>
    </citation>
    <scope>NUCLEOTIDE SEQUENCE [MRNA]</scope>
</reference>
<reference key="2">
    <citation type="online journal article" date="1996" name="Plant Gene Register">
        <title>Molecular cloning of cDNAs encoding Acetabularia acetabulum V type ATPase, A and B subunits.</title>
        <authorList>
            <person name="Ikeda M."/>
            <person name="Konishi K."/>
            <person name="Kadowaki H."/>
            <person name="Moritani C."/>
            <person name="Watanabe Y."/>
        </authorList>
        <locator>PGR96-030</locator>
    </citation>
    <scope>NUCLEOTIDE SEQUENCE [MRNA]</scope>
</reference>